<gene>
    <name evidence="6" type="primary">TMEM132E</name>
</gene>
<accession>Q6IEE7</accession>
<accession>A0A0J9YW40</accession>
<accession>Q8WUF4</accession>
<accession>Q8WVA5</accession>
<dbReference type="EMBL" id="AC005691">
    <property type="status" value="NOT_ANNOTATED_CDS"/>
    <property type="molecule type" value="Genomic_DNA"/>
</dbReference>
<dbReference type="EMBL" id="BC018318">
    <property type="protein sequence ID" value="AAH18318.1"/>
    <property type="molecule type" value="mRNA"/>
</dbReference>
<dbReference type="EMBL" id="BC020591">
    <property type="protein sequence ID" value="AAH20591.1"/>
    <property type="molecule type" value="mRNA"/>
</dbReference>
<dbReference type="EMBL" id="BN000149">
    <property type="protein sequence ID" value="CAD80169.1"/>
    <property type="status" value="ALT_SEQ"/>
    <property type="molecule type" value="mRNA"/>
</dbReference>
<dbReference type="CCDS" id="CCDS11283.2"/>
<dbReference type="RefSeq" id="NP_001291367.1">
    <property type="nucleotide sequence ID" value="NM_001304438.2"/>
</dbReference>
<dbReference type="SMR" id="Q6IEE7"/>
<dbReference type="BioGRID" id="125892">
    <property type="interactions" value="2"/>
</dbReference>
<dbReference type="FunCoup" id="Q6IEE7">
    <property type="interactions" value="45"/>
</dbReference>
<dbReference type="IntAct" id="Q6IEE7">
    <property type="interactions" value="1"/>
</dbReference>
<dbReference type="STRING" id="9606.ENSP00000487800"/>
<dbReference type="TCDB" id="8.A.143.1.5">
    <property type="family name" value="the tmem132 (tmem132) family"/>
</dbReference>
<dbReference type="GlyCosmos" id="Q6IEE7">
    <property type="glycosylation" value="6 sites, 2 glycans"/>
</dbReference>
<dbReference type="GlyGen" id="Q6IEE7">
    <property type="glycosylation" value="8 sites, 1 N-linked glycan (1 site), 3 O-linked glycans (3 sites)"/>
</dbReference>
<dbReference type="iPTMnet" id="Q6IEE7"/>
<dbReference type="PhosphoSitePlus" id="Q6IEE7"/>
<dbReference type="BioMuta" id="TMEM132E"/>
<dbReference type="DMDM" id="74709535"/>
<dbReference type="jPOST" id="Q6IEE7"/>
<dbReference type="MassIVE" id="Q6IEE7"/>
<dbReference type="PaxDb" id="9606-ENSP00000316532"/>
<dbReference type="PeptideAtlas" id="Q6IEE7"/>
<dbReference type="ProteomicsDB" id="66409"/>
<dbReference type="Pumba" id="Q6IEE7"/>
<dbReference type="Antibodypedia" id="55084">
    <property type="antibodies" value="67 antibodies from 16 providers"/>
</dbReference>
<dbReference type="DNASU" id="124842"/>
<dbReference type="Ensembl" id="ENST00000631683.2">
    <property type="protein sequence ID" value="ENSP00000487800.2"/>
    <property type="gene ID" value="ENSG00000181291.8"/>
</dbReference>
<dbReference type="GeneID" id="124842"/>
<dbReference type="KEGG" id="hsa:124842"/>
<dbReference type="MANE-Select" id="ENST00000631683.2">
    <property type="protein sequence ID" value="ENSP00000487800.2"/>
    <property type="RefSeq nucleotide sequence ID" value="NM_001304438.2"/>
    <property type="RefSeq protein sequence ID" value="NP_001291367.1"/>
</dbReference>
<dbReference type="UCSC" id="uc002hif.3">
    <property type="organism name" value="human"/>
</dbReference>
<dbReference type="AGR" id="HGNC:26991"/>
<dbReference type="CTD" id="124842"/>
<dbReference type="DisGeNET" id="124842"/>
<dbReference type="GeneCards" id="TMEM132E"/>
<dbReference type="HGNC" id="HGNC:26991">
    <property type="gene designation" value="TMEM132E"/>
</dbReference>
<dbReference type="HPA" id="ENSG00000181291">
    <property type="expression patterns" value="Tissue enriched (brain)"/>
</dbReference>
<dbReference type="MalaCards" id="TMEM132E"/>
<dbReference type="MIM" id="616178">
    <property type="type" value="gene"/>
</dbReference>
<dbReference type="MIM" id="618481">
    <property type="type" value="phenotype"/>
</dbReference>
<dbReference type="neXtProt" id="NX_Q6IEE7"/>
<dbReference type="OpenTargets" id="ENSG00000181291"/>
<dbReference type="Orphanet" id="90636">
    <property type="disease" value="Rare autosomal recessive non-syndromic sensorineural deafness type DFNB"/>
</dbReference>
<dbReference type="PharmGKB" id="PA143485655"/>
<dbReference type="VEuPathDB" id="HostDB:ENSG00000181291"/>
<dbReference type="eggNOG" id="KOG4789">
    <property type="taxonomic scope" value="Eukaryota"/>
</dbReference>
<dbReference type="GeneTree" id="ENSGT00940000158479"/>
<dbReference type="HOGENOM" id="CLU_009871_0_1_1"/>
<dbReference type="InParanoid" id="Q6IEE7"/>
<dbReference type="OMA" id="GEMVPRR"/>
<dbReference type="OrthoDB" id="10026202at2759"/>
<dbReference type="PAN-GO" id="Q6IEE7">
    <property type="GO annotations" value="0 GO annotations based on evolutionary models"/>
</dbReference>
<dbReference type="PhylomeDB" id="Q6IEE7"/>
<dbReference type="TreeFam" id="TF314981"/>
<dbReference type="PathwayCommons" id="Q6IEE7"/>
<dbReference type="BioGRID-ORCS" id="124842">
    <property type="hits" value="4 hits in 1144 CRISPR screens"/>
</dbReference>
<dbReference type="ChiTaRS" id="TMEM132E">
    <property type="organism name" value="human"/>
</dbReference>
<dbReference type="GenomeRNAi" id="124842"/>
<dbReference type="Pharos" id="Q6IEE7">
    <property type="development level" value="Tdark"/>
</dbReference>
<dbReference type="PRO" id="PR:Q6IEE7"/>
<dbReference type="Proteomes" id="UP000005640">
    <property type="component" value="Chromosome 17"/>
</dbReference>
<dbReference type="RNAct" id="Q6IEE7">
    <property type="molecule type" value="protein"/>
</dbReference>
<dbReference type="Bgee" id="ENSG00000181291">
    <property type="expression patterns" value="Expressed in kidney epithelium and 128 other cell types or tissues"/>
</dbReference>
<dbReference type="ExpressionAtlas" id="Q6IEE7">
    <property type="expression patterns" value="baseline and differential"/>
</dbReference>
<dbReference type="GO" id="GO:0044297">
    <property type="term" value="C:cell body"/>
    <property type="evidence" value="ECO:0000250"/>
    <property type="project" value="UniProtKB"/>
</dbReference>
<dbReference type="GO" id="GO:0016020">
    <property type="term" value="C:membrane"/>
    <property type="evidence" value="ECO:0007669"/>
    <property type="project" value="UniProtKB-SubCell"/>
</dbReference>
<dbReference type="GO" id="GO:0035677">
    <property type="term" value="P:posterior lateral line neuromast hair cell development"/>
    <property type="evidence" value="ECO:0000316"/>
    <property type="project" value="UniProtKB"/>
</dbReference>
<dbReference type="InterPro" id="IPR055422">
    <property type="entry name" value="Ig_TMEM132_2nd"/>
</dbReference>
<dbReference type="InterPro" id="IPR055423">
    <property type="entry name" value="Ig_TMEM132_5th"/>
</dbReference>
<dbReference type="InterPro" id="IPR055424">
    <property type="entry name" value="Ig_TMEM132_6th"/>
</dbReference>
<dbReference type="InterPro" id="IPR026307">
    <property type="entry name" value="TMEM132"/>
</dbReference>
<dbReference type="InterPro" id="IPR055421">
    <property type="entry name" value="TMEM132_3rd"/>
</dbReference>
<dbReference type="InterPro" id="IPR031436">
    <property type="entry name" value="TMEM132_C"/>
</dbReference>
<dbReference type="InterPro" id="IPR031437">
    <property type="entry name" value="TMEM132_M"/>
</dbReference>
<dbReference type="InterPro" id="IPR031435">
    <property type="entry name" value="TMEM132_N"/>
</dbReference>
<dbReference type="PANTHER" id="PTHR13388">
    <property type="entry name" value="DETONATOR, ISOFORM E"/>
    <property type="match status" value="1"/>
</dbReference>
<dbReference type="PANTHER" id="PTHR13388:SF7">
    <property type="entry name" value="TRANSMEMBRANE PROTEIN 132E"/>
    <property type="match status" value="1"/>
</dbReference>
<dbReference type="Pfam" id="PF23481">
    <property type="entry name" value="Ig_TMEM132_2nd"/>
    <property type="match status" value="1"/>
</dbReference>
<dbReference type="Pfam" id="PF16070">
    <property type="entry name" value="Ig_TMEM132_4th"/>
    <property type="match status" value="1"/>
</dbReference>
<dbReference type="Pfam" id="PF23486">
    <property type="entry name" value="Ig_TMEM132_5th"/>
    <property type="match status" value="1"/>
</dbReference>
<dbReference type="Pfam" id="PF23487">
    <property type="entry name" value="Ig_TMEM132_6th"/>
    <property type="match status" value="1"/>
</dbReference>
<dbReference type="Pfam" id="PF23039">
    <property type="entry name" value="TMEM132_3rd"/>
    <property type="match status" value="1"/>
</dbReference>
<dbReference type="Pfam" id="PF15706">
    <property type="entry name" value="TMEM132_C"/>
    <property type="match status" value="1"/>
</dbReference>
<dbReference type="Pfam" id="PF15705">
    <property type="entry name" value="TMEM132_N"/>
    <property type="match status" value="1"/>
</dbReference>
<reference key="1">
    <citation type="journal article" date="2006" name="Nature">
        <title>DNA sequence of human chromosome 17 and analysis of rearrangement in the human lineage.</title>
        <authorList>
            <person name="Zody M.C."/>
            <person name="Garber M."/>
            <person name="Adams D.J."/>
            <person name="Sharpe T."/>
            <person name="Harrow J."/>
            <person name="Lupski J.R."/>
            <person name="Nicholson C."/>
            <person name="Searle S.M."/>
            <person name="Wilming L."/>
            <person name="Young S.K."/>
            <person name="Abouelleil A."/>
            <person name="Allen N.R."/>
            <person name="Bi W."/>
            <person name="Bloom T."/>
            <person name="Borowsky M.L."/>
            <person name="Bugalter B.E."/>
            <person name="Butler J."/>
            <person name="Chang J.L."/>
            <person name="Chen C.-K."/>
            <person name="Cook A."/>
            <person name="Corum B."/>
            <person name="Cuomo C.A."/>
            <person name="de Jong P.J."/>
            <person name="DeCaprio D."/>
            <person name="Dewar K."/>
            <person name="FitzGerald M."/>
            <person name="Gilbert J."/>
            <person name="Gibson R."/>
            <person name="Gnerre S."/>
            <person name="Goldstein S."/>
            <person name="Grafham D.V."/>
            <person name="Grocock R."/>
            <person name="Hafez N."/>
            <person name="Hagopian D.S."/>
            <person name="Hart E."/>
            <person name="Norman C.H."/>
            <person name="Humphray S."/>
            <person name="Jaffe D.B."/>
            <person name="Jones M."/>
            <person name="Kamal M."/>
            <person name="Khodiyar V.K."/>
            <person name="LaButti K."/>
            <person name="Laird G."/>
            <person name="Lehoczky J."/>
            <person name="Liu X."/>
            <person name="Lokyitsang T."/>
            <person name="Loveland J."/>
            <person name="Lui A."/>
            <person name="Macdonald P."/>
            <person name="Major J.E."/>
            <person name="Matthews L."/>
            <person name="Mauceli E."/>
            <person name="McCarroll S.A."/>
            <person name="Mihalev A.H."/>
            <person name="Mudge J."/>
            <person name="Nguyen C."/>
            <person name="Nicol R."/>
            <person name="O'Leary S.B."/>
            <person name="Osoegawa K."/>
            <person name="Schwartz D.C."/>
            <person name="Shaw-Smith C."/>
            <person name="Stankiewicz P."/>
            <person name="Steward C."/>
            <person name="Swarbreck D."/>
            <person name="Venkataraman V."/>
            <person name="Whittaker C.A."/>
            <person name="Yang X."/>
            <person name="Zimmer A.R."/>
            <person name="Bradley A."/>
            <person name="Hubbard T."/>
            <person name="Birren B.W."/>
            <person name="Rogers J."/>
            <person name="Lander E.S."/>
            <person name="Nusbaum C."/>
        </authorList>
    </citation>
    <scope>NUCLEOTIDE SEQUENCE [LARGE SCALE GENOMIC DNA]</scope>
</reference>
<reference key="2">
    <citation type="journal article" date="2004" name="Genome Res.">
        <title>The status, quality, and expansion of the NIH full-length cDNA project: the Mammalian Gene Collection (MGC).</title>
        <authorList>
            <consortium name="The MGC Project Team"/>
        </authorList>
    </citation>
    <scope>NUCLEOTIDE SEQUENCE [LARGE SCALE MRNA] OF 340-1074</scope>
    <source>
        <tissue>Adrenal cortex</tissue>
        <tissue>Brain</tissue>
    </source>
</reference>
<reference key="3">
    <citation type="journal article" date="2003" name="J. Med. Genet.">
        <title>Heterogeneity of breakpoints in non-LCR-mediated large constitutional deletions of the 17q11.2 NF1 tumour suppressor region.</title>
        <authorList>
            <person name="Kehrer-Sawatzki H."/>
            <person name="Tinschert S."/>
            <person name="Jenne D.E."/>
        </authorList>
    </citation>
    <scope>IDENTIFICATION</scope>
    <scope>DISEASE</scope>
</reference>
<reference key="4">
    <citation type="journal article" date="2015" name="Hum. Mutat.">
        <title>Whole-exome sequencing identifies a variant in TMEM132E causing autosomal-recessive nonsyndromic hearing loss DFNB99.</title>
        <authorList>
            <person name="Li J."/>
            <person name="Zhao X."/>
            <person name="Xin Q."/>
            <person name="Shan S."/>
            <person name="Jiang B."/>
            <person name="Jin Y."/>
            <person name="Yuan H."/>
            <person name="Dai P."/>
            <person name="Xiao R."/>
            <person name="Zhang Q."/>
            <person name="Xiao J."/>
            <person name="Shao C."/>
            <person name="Gong Y."/>
            <person name="Liu Q."/>
        </authorList>
    </citation>
    <scope>INVOLVEMENT IN DFNB99</scope>
    <scope>VARIANT GLN-510</scope>
    <scope>FUNCTION</scope>
    <scope>VARIANT DFNB99 GLN-510</scope>
</reference>
<proteinExistence type="evidence at protein level"/>
<evidence type="ECO:0000255" key="1"/>
<evidence type="ECO:0000256" key="2">
    <source>
        <dbReference type="SAM" id="MobiDB-lite"/>
    </source>
</evidence>
<evidence type="ECO:0000269" key="3">
    <source>
    </source>
</evidence>
<evidence type="ECO:0000269" key="4">
    <source>
    </source>
</evidence>
<evidence type="ECO:0000305" key="5"/>
<evidence type="ECO:0000312" key="6">
    <source>
        <dbReference type="HGNC" id="HGNC:26991"/>
    </source>
</evidence>
<name>T132E_HUMAN</name>
<organism>
    <name type="scientific">Homo sapiens</name>
    <name type="common">Human</name>
    <dbReference type="NCBI Taxonomy" id="9606"/>
    <lineage>
        <taxon>Eukaryota</taxon>
        <taxon>Metazoa</taxon>
        <taxon>Chordata</taxon>
        <taxon>Craniata</taxon>
        <taxon>Vertebrata</taxon>
        <taxon>Euteleostomi</taxon>
        <taxon>Mammalia</taxon>
        <taxon>Eutheria</taxon>
        <taxon>Euarchontoglires</taxon>
        <taxon>Primates</taxon>
        <taxon>Haplorrhini</taxon>
        <taxon>Catarrhini</taxon>
        <taxon>Hominidae</taxon>
        <taxon>Homo</taxon>
    </lineage>
</organism>
<protein>
    <recommendedName>
        <fullName evidence="5">Transmembrane protein 132E</fullName>
    </recommendedName>
</protein>
<comment type="function">
    <text evidence="4">Required for normal inner ear hair cell function and hearing.</text>
</comment>
<comment type="subcellular location">
    <subcellularLocation>
        <location evidence="5">Membrane</location>
        <topology evidence="5">Single-pass type I membrane protein</topology>
    </subcellularLocation>
</comment>
<comment type="disease">
    <text evidence="3">TMEM132E is located in a region involved in a heterozygous deletion of approximately 4.7 Mb; this deletion, involving the NF1 gene and contiguous genes lying in its flanking regions, is observed in a patient with 17q11.2 microdeletion syndrome, a syndrome characterized by variable facial dysmorphism, intellectual disability, developmental delay, and an excessive number of neurofibromas.</text>
</comment>
<comment type="disease" evidence="4">
    <disease id="DI-05585">
        <name>Deafness, autosomal recessive, 99</name>
        <acronym>DFNB99</acronym>
        <description>A form of non-syndromic deafness characterized by prelingual, bilateral, severe-to-profound sensorineural hearing loss. Sensorineural deafness results from damage to the neural receptors of the inner ear, the nerve pathways to the brain, or the area of the brain that receives sound information.</description>
        <dbReference type="MIM" id="618481"/>
    </disease>
    <text>The disease is caused by variants affecting the gene represented in this entry.</text>
</comment>
<comment type="similarity">
    <text evidence="5">Belongs to the TMEM132 family.</text>
</comment>
<comment type="sequence caution" evidence="5">
    <conflict type="miscellaneous discrepancy">
        <sequence resource="EMBL-CDS" id="CAD80169"/>
    </conflict>
    <text>Artifactual sequence.</text>
</comment>
<sequence>MAPGMSGRGGAALLCLSALLAHASGRSHPASPSPPGPQASPVLPVSYRLSHTRLAFFLREARPPSPAVANSSLQRSEPFVVFQTKELPVLNVSLGPFSTSQVVARELLQPSSTLDIPERLTVNWKVRAFIVRSHVPASQPVVQVLFYVAGRDWDDFGVTERLPCVRLHAFRDAREVKSSCRLSGGLATCLVRAELPLAWFGPPAPAAPPTARRKSPDGLEPEATGESQQAELYYTLHAPDASGGCGGSRRGAGPGVGARAESPTQHPLLRIGSISLFRPPPRRTLQEHRLDSNLMIRLPDRPLKPGEVLSILLYLAPNSSSPSSPSVEHFTLRVKAKKGVTLLGTKSRSGQWHVTSELLTGAKHSTATVDVAWAQSTPLPPREGQGPLEILQLDFEMENFTSQSVKRRIMWHIDYRGHGALPDLERAVTELTVIQRDVQAILPLAMDTEIINTAILTGRTVAIPVKVIAIEVNGLVLDISALVECESDNEDIIKVSSSCDYVFVSGKESRGSMNARVTFRYDVLNAPLEMTVWVPKLPLHIELSDARLSQVKGWRVPILPDRRSVRESEDEDEEEEERRQSASRGCTLQYQHATLQVFTQFHTTSSEGTDQVVTMLGPDWLVEVTDLVSDFMRVGDPRVAHMVDSSTLAGLEPGTTPFKVVSPLTEAVLGETLLTVTEEKVSITQLQAQVVASLALSLRPSPGSSHTILATTAAQQTLSFLKQEALLSLWLSYSDGTTAPLSLYSPRDYGLLVSSLDEHVATVTQDRAFPLVVAEAEGSGELLRAELTIAESCQKTKRKSVLATTPVGLRVHFGRDEEDPTYDYPGPSQPGPGGGEDEARGAGPPGSALPAPEAPGPGTASPVVPPTEDFLPLPTGFLQVPRGLTDLEIGMYALLGVFCLAILVFLINCIVFVLRYRHKRIPPEGQTSMDHSHHWVFLGNGQPLRVQGELSPPAGNPLETVPAFCHGDHHSSGSSQTSVQSQVHGRGDGSSGGSARDQAEDPASSPTSKRKRVKFTTFTTLPSEELAYDSVPAGEEDEEEEEDLGWGCPDVAGPTRPTAPPDLHNYMRRIKEIA</sequence>
<keyword id="KW-0209">Deafness</keyword>
<keyword id="KW-0225">Disease variant</keyword>
<keyword id="KW-0325">Glycoprotein</keyword>
<keyword id="KW-0472">Membrane</keyword>
<keyword id="KW-1010">Non-syndromic deafness</keyword>
<keyword id="KW-1267">Proteomics identification</keyword>
<keyword id="KW-1185">Reference proteome</keyword>
<keyword id="KW-0732">Signal</keyword>
<keyword id="KW-0812">Transmembrane</keyword>
<keyword id="KW-1133">Transmembrane helix</keyword>
<feature type="signal peptide" evidence="1">
    <location>
        <begin position="1"/>
        <end position="25"/>
    </location>
</feature>
<feature type="chain" id="PRO_0000287103" description="Transmembrane protein 132E">
    <location>
        <begin position="26"/>
        <end position="1074"/>
    </location>
</feature>
<feature type="topological domain" description="Extracellular" evidence="1">
    <location>
        <begin position="26"/>
        <end position="893"/>
    </location>
</feature>
<feature type="transmembrane region" description="Helical" evidence="1">
    <location>
        <begin position="894"/>
        <end position="914"/>
    </location>
</feature>
<feature type="topological domain" description="Cytoplasmic" evidence="1">
    <location>
        <begin position="915"/>
        <end position="1074"/>
    </location>
</feature>
<feature type="region of interest" description="Disordered" evidence="2">
    <location>
        <begin position="202"/>
        <end position="226"/>
    </location>
</feature>
<feature type="region of interest" description="Disordered" evidence="2">
    <location>
        <begin position="241"/>
        <end position="264"/>
    </location>
</feature>
<feature type="region of interest" description="Disordered" evidence="2">
    <location>
        <begin position="563"/>
        <end position="585"/>
    </location>
</feature>
<feature type="region of interest" description="Disordered" evidence="2">
    <location>
        <begin position="814"/>
        <end position="867"/>
    </location>
</feature>
<feature type="region of interest" description="Disordered" evidence="2">
    <location>
        <begin position="946"/>
        <end position="1063"/>
    </location>
</feature>
<feature type="compositionally biased region" description="Gly residues" evidence="2">
    <location>
        <begin position="243"/>
        <end position="256"/>
    </location>
</feature>
<feature type="compositionally biased region" description="Low complexity" evidence="2">
    <location>
        <begin position="841"/>
        <end position="862"/>
    </location>
</feature>
<feature type="compositionally biased region" description="Low complexity" evidence="2">
    <location>
        <begin position="972"/>
        <end position="984"/>
    </location>
</feature>
<feature type="compositionally biased region" description="Acidic residues" evidence="2">
    <location>
        <begin position="1034"/>
        <end position="1044"/>
    </location>
</feature>
<feature type="glycosylation site" description="N-linked (GlcNAc...) asparagine" evidence="1">
    <location>
        <position position="70"/>
    </location>
</feature>
<feature type="glycosylation site" description="N-linked (GlcNAc...) asparagine" evidence="1">
    <location>
        <position position="91"/>
    </location>
</feature>
<feature type="glycosylation site" description="N-linked (GlcNAc...) asparagine" evidence="1">
    <location>
        <position position="318"/>
    </location>
</feature>
<feature type="glycosylation site" description="N-linked (GlcNAc...) asparagine" evidence="1">
    <location>
        <position position="399"/>
    </location>
</feature>
<feature type="sequence variant" id="VAR_073717" description="In DFNB99; dbSNP:rs139895222." evidence="4">
    <original>R</original>
    <variation>Q</variation>
    <location>
        <position position="510"/>
    </location>
</feature>
<feature type="sequence conflict" description="In Ref. 2; AAH20591." evidence="5" ref="2">
    <original>V</original>
    <variation>F</variation>
    <location>
        <position position="534"/>
    </location>
</feature>